<name>GIR2_YEAST</name>
<gene>
    <name type="primary">GIR2</name>
    <name type="synonym">DFRP2</name>
    <name type="ordered locus">YDR152W</name>
    <name type="ORF">YD8358.08</name>
</gene>
<accession>Q03768</accession>
<accession>D6VSD4</accession>
<reference key="1">
    <citation type="journal article" date="1997" name="Nature">
        <title>The nucleotide sequence of Saccharomyces cerevisiae chromosome IV.</title>
        <authorList>
            <person name="Jacq C."/>
            <person name="Alt-Moerbe J."/>
            <person name="Andre B."/>
            <person name="Arnold W."/>
            <person name="Bahr A."/>
            <person name="Ballesta J.P.G."/>
            <person name="Bargues M."/>
            <person name="Baron L."/>
            <person name="Becker A."/>
            <person name="Biteau N."/>
            <person name="Bloecker H."/>
            <person name="Blugeon C."/>
            <person name="Boskovic J."/>
            <person name="Brandt P."/>
            <person name="Brueckner M."/>
            <person name="Buitrago M.J."/>
            <person name="Coster F."/>
            <person name="Delaveau T."/>
            <person name="del Rey F."/>
            <person name="Dujon B."/>
            <person name="Eide L.G."/>
            <person name="Garcia-Cantalejo J.M."/>
            <person name="Goffeau A."/>
            <person name="Gomez-Peris A."/>
            <person name="Granotier C."/>
            <person name="Hanemann V."/>
            <person name="Hankeln T."/>
            <person name="Hoheisel J.D."/>
            <person name="Jaeger W."/>
            <person name="Jimenez A."/>
            <person name="Jonniaux J.-L."/>
            <person name="Kraemer C."/>
            <person name="Kuester H."/>
            <person name="Laamanen P."/>
            <person name="Legros Y."/>
            <person name="Louis E.J."/>
            <person name="Moeller-Rieker S."/>
            <person name="Monnet A."/>
            <person name="Moro M."/>
            <person name="Mueller-Auer S."/>
            <person name="Nussbaumer B."/>
            <person name="Paricio N."/>
            <person name="Paulin L."/>
            <person name="Perea J."/>
            <person name="Perez-Alonso M."/>
            <person name="Perez-Ortin J.E."/>
            <person name="Pohl T.M."/>
            <person name="Prydz H."/>
            <person name="Purnelle B."/>
            <person name="Rasmussen S.W."/>
            <person name="Remacha M.A."/>
            <person name="Revuelta J.L."/>
            <person name="Rieger M."/>
            <person name="Salom D."/>
            <person name="Saluz H.P."/>
            <person name="Saiz J.E."/>
            <person name="Saren A.-M."/>
            <person name="Schaefer M."/>
            <person name="Scharfe M."/>
            <person name="Schmidt E.R."/>
            <person name="Schneider C."/>
            <person name="Scholler P."/>
            <person name="Schwarz S."/>
            <person name="Soler-Mira A."/>
            <person name="Urrestarazu L.A."/>
            <person name="Verhasselt P."/>
            <person name="Vissers S."/>
            <person name="Voet M."/>
            <person name="Volckaert G."/>
            <person name="Wagner G."/>
            <person name="Wambutt R."/>
            <person name="Wedler E."/>
            <person name="Wedler H."/>
            <person name="Woelfl S."/>
            <person name="Harris D.E."/>
            <person name="Bowman S."/>
            <person name="Brown D."/>
            <person name="Churcher C.M."/>
            <person name="Connor R."/>
            <person name="Dedman K."/>
            <person name="Gentles S."/>
            <person name="Hamlin N."/>
            <person name="Hunt S."/>
            <person name="Jones L."/>
            <person name="McDonald S."/>
            <person name="Murphy L.D."/>
            <person name="Niblett D."/>
            <person name="Odell C."/>
            <person name="Oliver K."/>
            <person name="Rajandream M.A."/>
            <person name="Richards C."/>
            <person name="Shore L."/>
            <person name="Walsh S.V."/>
            <person name="Barrell B.G."/>
            <person name="Dietrich F.S."/>
            <person name="Mulligan J.T."/>
            <person name="Allen E."/>
            <person name="Araujo R."/>
            <person name="Aviles E."/>
            <person name="Berno A."/>
            <person name="Carpenter J."/>
            <person name="Chen E."/>
            <person name="Cherry J.M."/>
            <person name="Chung E."/>
            <person name="Duncan M."/>
            <person name="Hunicke-Smith S."/>
            <person name="Hyman R.W."/>
            <person name="Komp C."/>
            <person name="Lashkari D."/>
            <person name="Lew H."/>
            <person name="Lin D."/>
            <person name="Mosedale D."/>
            <person name="Nakahara K."/>
            <person name="Namath A."/>
            <person name="Oefner P."/>
            <person name="Oh C."/>
            <person name="Petel F.X."/>
            <person name="Roberts D."/>
            <person name="Schramm S."/>
            <person name="Schroeder M."/>
            <person name="Shogren T."/>
            <person name="Shroff N."/>
            <person name="Winant A."/>
            <person name="Yelton M.A."/>
            <person name="Botstein D."/>
            <person name="Davis R.W."/>
            <person name="Johnston M."/>
            <person name="Andrews S."/>
            <person name="Brinkman R."/>
            <person name="Cooper J."/>
            <person name="Ding H."/>
            <person name="Du Z."/>
            <person name="Favello A."/>
            <person name="Fulton L."/>
            <person name="Gattung S."/>
            <person name="Greco T."/>
            <person name="Hallsworth K."/>
            <person name="Hawkins J."/>
            <person name="Hillier L.W."/>
            <person name="Jier M."/>
            <person name="Johnson D."/>
            <person name="Johnston L."/>
            <person name="Kirsten J."/>
            <person name="Kucaba T."/>
            <person name="Langston Y."/>
            <person name="Latreille P."/>
            <person name="Le T."/>
            <person name="Mardis E."/>
            <person name="Menezes S."/>
            <person name="Miller N."/>
            <person name="Nhan M."/>
            <person name="Pauley A."/>
            <person name="Peluso D."/>
            <person name="Rifkin L."/>
            <person name="Riles L."/>
            <person name="Taich A."/>
            <person name="Trevaskis E."/>
            <person name="Vignati D."/>
            <person name="Wilcox L."/>
            <person name="Wohldman P."/>
            <person name="Vaudin M."/>
            <person name="Wilson R."/>
            <person name="Waterston R."/>
            <person name="Albermann K."/>
            <person name="Hani J."/>
            <person name="Heumann K."/>
            <person name="Kleine K."/>
            <person name="Mewes H.-W."/>
            <person name="Zollner A."/>
            <person name="Zaccaria P."/>
        </authorList>
    </citation>
    <scope>NUCLEOTIDE SEQUENCE [LARGE SCALE GENOMIC DNA]</scope>
    <source>
        <strain>ATCC 204508 / S288c</strain>
    </source>
</reference>
<reference key="2">
    <citation type="journal article" date="2014" name="G3 (Bethesda)">
        <title>The reference genome sequence of Saccharomyces cerevisiae: Then and now.</title>
        <authorList>
            <person name="Engel S.R."/>
            <person name="Dietrich F.S."/>
            <person name="Fisk D.G."/>
            <person name="Binkley G."/>
            <person name="Balakrishnan R."/>
            <person name="Costanzo M.C."/>
            <person name="Dwight S.S."/>
            <person name="Hitz B.C."/>
            <person name="Karra K."/>
            <person name="Nash R.S."/>
            <person name="Weng S."/>
            <person name="Wong E.D."/>
            <person name="Lloyd P."/>
            <person name="Skrzypek M.S."/>
            <person name="Miyasato S.R."/>
            <person name="Simison M."/>
            <person name="Cherry J.M."/>
        </authorList>
    </citation>
    <scope>GENOME REANNOTATION</scope>
    <source>
        <strain>ATCC 204508 / S288c</strain>
    </source>
</reference>
<reference key="3">
    <citation type="journal article" date="2007" name="Genome Res.">
        <title>Approaching a complete repository of sequence-verified protein-encoding clones for Saccharomyces cerevisiae.</title>
        <authorList>
            <person name="Hu Y."/>
            <person name="Rolfs A."/>
            <person name="Bhullar B."/>
            <person name="Murthy T.V.S."/>
            <person name="Zhu C."/>
            <person name="Berger M.F."/>
            <person name="Camargo A.A."/>
            <person name="Kelley F."/>
            <person name="McCarron S."/>
            <person name="Jepson D."/>
            <person name="Richardson A."/>
            <person name="Raphael J."/>
            <person name="Moreira D."/>
            <person name="Taycher E."/>
            <person name="Zuo D."/>
            <person name="Mohr S."/>
            <person name="Kane M.F."/>
            <person name="Williamson J."/>
            <person name="Simpson A.J.G."/>
            <person name="Bulyk M.L."/>
            <person name="Harlow E."/>
            <person name="Marsischky G."/>
            <person name="Kolodner R.D."/>
            <person name="LaBaer J."/>
        </authorList>
    </citation>
    <scope>NUCLEOTIDE SEQUENCE [GENOMIC DNA]</scope>
    <source>
        <strain>ATCC 204508 / S288c</strain>
    </source>
</reference>
<reference key="4">
    <citation type="journal article" date="2003" name="Nature">
        <title>Global analysis of protein expression in yeast.</title>
        <authorList>
            <person name="Ghaemmaghami S."/>
            <person name="Huh W.-K."/>
            <person name="Bower K."/>
            <person name="Howson R.W."/>
            <person name="Belle A."/>
            <person name="Dephoure N."/>
            <person name="O'Shea E.K."/>
            <person name="Weissman J.S."/>
        </authorList>
    </citation>
    <scope>LEVEL OF PROTEIN EXPRESSION [LARGE SCALE ANALYSIS]</scope>
</reference>
<reference key="5">
    <citation type="journal article" date="2005" name="Genes Cells">
        <title>Identification of DRG family regulatory proteins (DFRPs): specific regulation of DRG1 and DRG2.</title>
        <authorList>
            <person name="Ishikawa K."/>
            <person name="Azuma S."/>
            <person name="Ikawa S."/>
            <person name="Semba K."/>
            <person name="Inoue J."/>
        </authorList>
    </citation>
    <scope>IDENTIFICATION</scope>
</reference>
<reference key="6">
    <citation type="journal article" date="2009" name="Eukaryot. Cell">
        <title>Saccharomyces cerevisiae Rbg1 protein and its binding partner Gir2 interact on polyribosomes with Gcn1.</title>
        <authorList>
            <person name="Wout P.K."/>
            <person name="Sattlegger E."/>
            <person name="Sullivan S.M."/>
            <person name="Maddock J.R."/>
        </authorList>
    </citation>
    <scope>FUNCTION</scope>
    <scope>INTERACTION WITH GCN1 AND RBG1</scope>
    <scope>ASSOCIATION WITH RIBOSOMES</scope>
</reference>
<proteinExistence type="evidence at protein level"/>
<dbReference type="EMBL" id="Z50046">
    <property type="protein sequence ID" value="CAA90374.1"/>
    <property type="molecule type" value="Genomic_DNA"/>
</dbReference>
<dbReference type="EMBL" id="AY557681">
    <property type="protein sequence ID" value="AAS56007.1"/>
    <property type="molecule type" value="Genomic_DNA"/>
</dbReference>
<dbReference type="EMBL" id="BK006938">
    <property type="protein sequence ID" value="DAA11994.1"/>
    <property type="molecule type" value="Genomic_DNA"/>
</dbReference>
<dbReference type="PIR" id="S57978">
    <property type="entry name" value="S57978"/>
</dbReference>
<dbReference type="RefSeq" id="NP_010436.3">
    <property type="nucleotide sequence ID" value="NM_001180459.3"/>
</dbReference>
<dbReference type="SMR" id="Q03768"/>
<dbReference type="BioGRID" id="32205">
    <property type="interactions" value="62"/>
</dbReference>
<dbReference type="DIP" id="DIP-1751N"/>
<dbReference type="FunCoup" id="Q03768">
    <property type="interactions" value="892"/>
</dbReference>
<dbReference type="IntAct" id="Q03768">
    <property type="interactions" value="10"/>
</dbReference>
<dbReference type="MINT" id="Q03768"/>
<dbReference type="STRING" id="4932.YDR152W"/>
<dbReference type="GlyGen" id="Q03768">
    <property type="glycosylation" value="3 sites, 1 O-linked glycan (3 sites)"/>
</dbReference>
<dbReference type="iPTMnet" id="Q03768"/>
<dbReference type="PaxDb" id="4932-YDR152W"/>
<dbReference type="PeptideAtlas" id="Q03768"/>
<dbReference type="EnsemblFungi" id="YDR152W_mRNA">
    <property type="protein sequence ID" value="YDR152W"/>
    <property type="gene ID" value="YDR152W"/>
</dbReference>
<dbReference type="GeneID" id="851730"/>
<dbReference type="KEGG" id="sce:YDR152W"/>
<dbReference type="AGR" id="SGD:S000002559"/>
<dbReference type="SGD" id="S000002559">
    <property type="gene designation" value="GIR2"/>
</dbReference>
<dbReference type="VEuPathDB" id="FungiDB:YDR152W"/>
<dbReference type="eggNOG" id="KOG4018">
    <property type="taxonomic scope" value="Eukaryota"/>
</dbReference>
<dbReference type="GeneTree" id="ENSGT00390000009168"/>
<dbReference type="HOGENOM" id="CLU_084528_0_0_1"/>
<dbReference type="InParanoid" id="Q03768"/>
<dbReference type="OMA" id="QWDEHKK"/>
<dbReference type="OrthoDB" id="277175at2759"/>
<dbReference type="BioCyc" id="YEAST:G3O-29746-MONOMER"/>
<dbReference type="BioGRID-ORCS" id="851730">
    <property type="hits" value="0 hits in 10 CRISPR screens"/>
</dbReference>
<dbReference type="PRO" id="PR:Q03768"/>
<dbReference type="Proteomes" id="UP000002311">
    <property type="component" value="Chromosome IV"/>
</dbReference>
<dbReference type="RNAct" id="Q03768">
    <property type="molecule type" value="protein"/>
</dbReference>
<dbReference type="GO" id="GO:0005737">
    <property type="term" value="C:cytoplasm"/>
    <property type="evidence" value="ECO:0007005"/>
    <property type="project" value="SGD"/>
</dbReference>
<dbReference type="GO" id="GO:0004860">
    <property type="term" value="F:protein kinase inhibitor activity"/>
    <property type="evidence" value="ECO:0000314"/>
    <property type="project" value="UniProtKB"/>
</dbReference>
<dbReference type="GO" id="GO:0034198">
    <property type="term" value="P:cellular response to amino acid starvation"/>
    <property type="evidence" value="ECO:0000314"/>
    <property type="project" value="UniProtKB"/>
</dbReference>
<dbReference type="GO" id="GO:0002181">
    <property type="term" value="P:cytoplasmic translation"/>
    <property type="evidence" value="ECO:0000316"/>
    <property type="project" value="SGD"/>
</dbReference>
<dbReference type="GO" id="GO:0001933">
    <property type="term" value="P:negative regulation of protein phosphorylation"/>
    <property type="evidence" value="ECO:0000314"/>
    <property type="project" value="UniProtKB"/>
</dbReference>
<dbReference type="GO" id="GO:0031333">
    <property type="term" value="P:negative regulation of protein-containing complex assembly"/>
    <property type="evidence" value="ECO:0000314"/>
    <property type="project" value="UniProtKB"/>
</dbReference>
<dbReference type="GO" id="GO:1903833">
    <property type="term" value="P:positive regulation of cellular response to amino acid starvation"/>
    <property type="evidence" value="ECO:0000315"/>
    <property type="project" value="SGD"/>
</dbReference>
<dbReference type="CDD" id="cd23824">
    <property type="entry name" value="RWD_ScGIR2-like"/>
    <property type="match status" value="1"/>
</dbReference>
<dbReference type="DisProt" id="DP00163"/>
<dbReference type="Gene3D" id="3.10.110.10">
    <property type="entry name" value="Ubiquitin Conjugating Enzyme"/>
    <property type="match status" value="1"/>
</dbReference>
<dbReference type="InterPro" id="IPR040213">
    <property type="entry name" value="GIR2-like"/>
</dbReference>
<dbReference type="InterPro" id="IPR006575">
    <property type="entry name" value="RWD_dom"/>
</dbReference>
<dbReference type="InterPro" id="IPR016135">
    <property type="entry name" value="UBQ-conjugating_enzyme/RWD"/>
</dbReference>
<dbReference type="PANTHER" id="PTHR12292">
    <property type="entry name" value="RWD DOMAIN-CONTAINING PROTEIN"/>
    <property type="match status" value="1"/>
</dbReference>
<dbReference type="Pfam" id="PF05773">
    <property type="entry name" value="RWD"/>
    <property type="match status" value="1"/>
</dbReference>
<dbReference type="SMART" id="SM00591">
    <property type="entry name" value="RWD"/>
    <property type="match status" value="1"/>
</dbReference>
<dbReference type="SUPFAM" id="SSF54495">
    <property type="entry name" value="UBC-like"/>
    <property type="match status" value="1"/>
</dbReference>
<dbReference type="PROSITE" id="PS50908">
    <property type="entry name" value="RWD"/>
    <property type="match status" value="1"/>
</dbReference>
<organism>
    <name type="scientific">Saccharomyces cerevisiae (strain ATCC 204508 / S288c)</name>
    <name type="common">Baker's yeast</name>
    <dbReference type="NCBI Taxonomy" id="559292"/>
    <lineage>
        <taxon>Eukaryota</taxon>
        <taxon>Fungi</taxon>
        <taxon>Dikarya</taxon>
        <taxon>Ascomycota</taxon>
        <taxon>Saccharomycotina</taxon>
        <taxon>Saccharomycetes</taxon>
        <taxon>Saccharomycetales</taxon>
        <taxon>Saccharomycetaceae</taxon>
        <taxon>Saccharomyces</taxon>
    </lineage>
</organism>
<evidence type="ECO:0000255" key="1">
    <source>
        <dbReference type="PROSITE-ProRule" id="PRU00179"/>
    </source>
</evidence>
<evidence type="ECO:0000269" key="2">
    <source>
    </source>
</evidence>
<evidence type="ECO:0000269" key="3">
    <source>
    </source>
</evidence>
<evidence type="ECO:0000305" key="4"/>
<feature type="chain" id="PRO_0000087495" description="Protein GIR2">
    <location>
        <begin position="1"/>
        <end position="265"/>
    </location>
</feature>
<feature type="domain" description="RWD" evidence="1">
    <location>
        <begin position="9"/>
        <end position="159"/>
    </location>
</feature>
<sequence>MDYKEEQKQELEVLESIYPDELRIINDEYPKIKFEVAIKLELDTGDSTSVLTKEHTIIAEFKLPENYPDEPCLISLEAQEVALNDNEEDNEEDEDEVEYDDHGNKVLKKFENLPDLISFKGYLPELTVQLESQIETDMLLGMQMCFALISSIKERCEQWYSEQLNKLEKQYELEAQEREKKEQAKFHGTKVTRESYLEWRSKFRQELKLDERDQVRRMKAHHGKLTGKQMFEQGVVGTGDEYMEEDDASVDDVAKGLAKTEIANQ</sequence>
<protein>
    <recommendedName>
        <fullName>Protein GIR2</fullName>
    </recommendedName>
    <alternativeName>
        <fullName>DRG family-regulatory protein 2</fullName>
    </alternativeName>
    <alternativeName>
        <fullName>Genetically interacts with ribosomal genes protein 2</fullName>
    </alternativeName>
</protein>
<comment type="function">
    <text evidence="3">Acts as a negative regulator of the GCN2 kinase activity by disrupting the GCN1-GCN2 interaction in amino acid-starved cells (PubMed:19448108).</text>
</comment>
<comment type="subunit">
    <text evidence="3">Interacts with GCN1; this interaction prevents the interaction of GCN1 with GCN2 protein kinase and GCN2 activation in amino acid-starved cells (PubMed:19448108). Interacts with RBG1 (PubMed:19448108). Associates with ribosomes; the association occurs in a GCN1-dependent manner (PubMed:19448108).</text>
</comment>
<comment type="interaction">
    <interactant intactId="EBI-7618">
        <id>Q03768</id>
    </interactant>
    <interactant intactId="EBI-20651">
        <id>P39729</id>
        <label>RBG1</label>
    </interactant>
    <organismsDiffer>false</organismsDiffer>
    <experiments>3</experiments>
</comment>
<comment type="interaction">
    <interactant intactId="EBI-7618">
        <id>Q03768</id>
    </interactant>
    <interactant intactId="EBI-23421">
        <id>P53295</id>
        <label>RBG2</label>
    </interactant>
    <organismsDiffer>false</organismsDiffer>
    <experiments>6</experiments>
</comment>
<comment type="miscellaneous">
    <text evidence="2">Present with 10300 molecules/cell in log phase SD medium.</text>
</comment>
<comment type="similarity">
    <text evidence="4">Belongs to the RWDD1/GIR2 family.</text>
</comment>
<keyword id="KW-1185">Reference proteome</keyword>
<keyword id="KW-0678">Repressor</keyword>
<keyword id="KW-0346">Stress response</keyword>